<reference key="1">
    <citation type="journal article" date="2004" name="Nucleic Acids Res.">
        <title>Genome sequence of Symbiobacterium thermophilum, an uncultivable bacterium that depends on microbial commensalism.</title>
        <authorList>
            <person name="Ueda K."/>
            <person name="Yamashita A."/>
            <person name="Ishikawa J."/>
            <person name="Shimada M."/>
            <person name="Watsuji T."/>
            <person name="Morimura K."/>
            <person name="Ikeda H."/>
            <person name="Hattori M."/>
            <person name="Beppu T."/>
        </authorList>
    </citation>
    <scope>NUCLEOTIDE SEQUENCE [LARGE SCALE GENOMIC DNA]</scope>
    <source>
        <strain>DSM 24528 / JCM 14929 / IAM 14863 / T</strain>
    </source>
</reference>
<dbReference type="EC" id="5.4.99.62" evidence="1"/>
<dbReference type="EMBL" id="AP006840">
    <property type="protein sequence ID" value="BAD39757.1"/>
    <property type="molecule type" value="Genomic_DNA"/>
</dbReference>
<dbReference type="RefSeq" id="WP_011194905.1">
    <property type="nucleotide sequence ID" value="NC_006177.1"/>
</dbReference>
<dbReference type="SMR" id="Q67RD6"/>
<dbReference type="STRING" id="292459.STH772"/>
<dbReference type="KEGG" id="sth:STH772"/>
<dbReference type="eggNOG" id="COG1869">
    <property type="taxonomic scope" value="Bacteria"/>
</dbReference>
<dbReference type="HOGENOM" id="CLU_135498_0_0_9"/>
<dbReference type="OrthoDB" id="9805009at2"/>
<dbReference type="UniPathway" id="UPA00916">
    <property type="reaction ID" value="UER00888"/>
</dbReference>
<dbReference type="Proteomes" id="UP000000417">
    <property type="component" value="Chromosome"/>
</dbReference>
<dbReference type="GO" id="GO:0005829">
    <property type="term" value="C:cytosol"/>
    <property type="evidence" value="ECO:0007669"/>
    <property type="project" value="TreeGrafter"/>
</dbReference>
<dbReference type="GO" id="GO:0062193">
    <property type="term" value="F:D-ribose pyranase activity"/>
    <property type="evidence" value="ECO:0007669"/>
    <property type="project" value="UniProtKB-EC"/>
</dbReference>
<dbReference type="GO" id="GO:0016872">
    <property type="term" value="F:intramolecular lyase activity"/>
    <property type="evidence" value="ECO:0007669"/>
    <property type="project" value="UniProtKB-UniRule"/>
</dbReference>
<dbReference type="GO" id="GO:0048029">
    <property type="term" value="F:monosaccharide binding"/>
    <property type="evidence" value="ECO:0007669"/>
    <property type="project" value="InterPro"/>
</dbReference>
<dbReference type="GO" id="GO:0019303">
    <property type="term" value="P:D-ribose catabolic process"/>
    <property type="evidence" value="ECO:0007669"/>
    <property type="project" value="UniProtKB-UniRule"/>
</dbReference>
<dbReference type="Gene3D" id="3.40.1650.10">
    <property type="entry name" value="RbsD-like domain"/>
    <property type="match status" value="1"/>
</dbReference>
<dbReference type="HAMAP" id="MF_01661">
    <property type="entry name" value="D_rib_pyranase"/>
    <property type="match status" value="1"/>
</dbReference>
<dbReference type="InterPro" id="IPR023064">
    <property type="entry name" value="D-ribose_pyranase"/>
</dbReference>
<dbReference type="InterPro" id="IPR023750">
    <property type="entry name" value="RbsD-like_sf"/>
</dbReference>
<dbReference type="InterPro" id="IPR007721">
    <property type="entry name" value="RbsD_FucU"/>
</dbReference>
<dbReference type="NCBIfam" id="NF008761">
    <property type="entry name" value="PRK11797.1"/>
    <property type="match status" value="1"/>
</dbReference>
<dbReference type="PANTHER" id="PTHR37831">
    <property type="entry name" value="D-RIBOSE PYRANASE"/>
    <property type="match status" value="1"/>
</dbReference>
<dbReference type="PANTHER" id="PTHR37831:SF1">
    <property type="entry name" value="D-RIBOSE PYRANASE"/>
    <property type="match status" value="1"/>
</dbReference>
<dbReference type="Pfam" id="PF05025">
    <property type="entry name" value="RbsD_FucU"/>
    <property type="match status" value="1"/>
</dbReference>
<dbReference type="SUPFAM" id="SSF102546">
    <property type="entry name" value="RbsD-like"/>
    <property type="match status" value="1"/>
</dbReference>
<evidence type="ECO:0000255" key="1">
    <source>
        <dbReference type="HAMAP-Rule" id="MF_01661"/>
    </source>
</evidence>
<feature type="chain" id="PRO_0000346286" description="D-ribose pyranase">
    <location>
        <begin position="1"/>
        <end position="131"/>
    </location>
</feature>
<feature type="active site" description="Proton donor" evidence="1">
    <location>
        <position position="20"/>
    </location>
</feature>
<feature type="binding site" evidence="1">
    <location>
        <position position="28"/>
    </location>
    <ligand>
        <name>substrate</name>
    </ligand>
</feature>
<feature type="binding site" evidence="1">
    <location>
        <position position="98"/>
    </location>
    <ligand>
        <name>substrate</name>
    </ligand>
</feature>
<feature type="binding site" evidence="1">
    <location>
        <begin position="120"/>
        <end position="122"/>
    </location>
    <ligand>
        <name>substrate</name>
    </ligand>
</feature>
<name>RBSD_SYMTH</name>
<organism>
    <name type="scientific">Symbiobacterium thermophilum (strain DSM 24528 / JCM 14929 / IAM 14863 / T)</name>
    <dbReference type="NCBI Taxonomy" id="292459"/>
    <lineage>
        <taxon>Bacteria</taxon>
        <taxon>Bacillati</taxon>
        <taxon>Bacillota</taxon>
        <taxon>Clostridia</taxon>
        <taxon>Eubacteriales</taxon>
        <taxon>Symbiobacteriaceae</taxon>
        <taxon>Symbiobacterium</taxon>
    </lineage>
</organism>
<proteinExistence type="inferred from homology"/>
<sequence>MKKTTLLNQALSEVVAGMGHGDLLVIGDYGLPCPKGVRRIDLALRPGIPAFLDVVETILAELQVEAAVVARETAERNPAVQEGLTRLLGGVPVTTVSHEELKEISARAVALVRTGECTPYANVILRAGVTF</sequence>
<protein>
    <recommendedName>
        <fullName evidence="1">D-ribose pyranase</fullName>
        <ecNumber evidence="1">5.4.99.62</ecNumber>
    </recommendedName>
</protein>
<comment type="function">
    <text evidence="1">Catalyzes the interconversion of beta-pyran and beta-furan forms of D-ribose.</text>
</comment>
<comment type="catalytic activity">
    <reaction evidence="1">
        <text>beta-D-ribopyranose = beta-D-ribofuranose</text>
        <dbReference type="Rhea" id="RHEA:25432"/>
        <dbReference type="ChEBI" id="CHEBI:27476"/>
        <dbReference type="ChEBI" id="CHEBI:47002"/>
        <dbReference type="EC" id="5.4.99.62"/>
    </reaction>
</comment>
<comment type="pathway">
    <text evidence="1">Carbohydrate metabolism; D-ribose degradation; D-ribose 5-phosphate from beta-D-ribopyranose: step 1/2.</text>
</comment>
<comment type="subunit">
    <text evidence="1">Homodecamer.</text>
</comment>
<comment type="subcellular location">
    <subcellularLocation>
        <location evidence="1">Cytoplasm</location>
    </subcellularLocation>
</comment>
<comment type="similarity">
    <text evidence="1">Belongs to the RbsD / FucU family. RbsD subfamily.</text>
</comment>
<gene>
    <name evidence="1" type="primary">rbsD</name>
    <name type="ordered locus">STH772</name>
</gene>
<accession>Q67RD6</accession>
<keyword id="KW-0119">Carbohydrate metabolism</keyword>
<keyword id="KW-0963">Cytoplasm</keyword>
<keyword id="KW-0413">Isomerase</keyword>
<keyword id="KW-1185">Reference proteome</keyword>